<dbReference type="EMBL" id="AM286415">
    <property type="protein sequence ID" value="CAL11842.1"/>
    <property type="molecule type" value="Genomic_DNA"/>
</dbReference>
<dbReference type="RefSeq" id="WP_005163652.1">
    <property type="nucleotide sequence ID" value="NC_008800.1"/>
</dbReference>
<dbReference type="RefSeq" id="YP_001006050.1">
    <property type="nucleotide sequence ID" value="NC_008800.1"/>
</dbReference>
<dbReference type="KEGG" id="yen:YE1773"/>
<dbReference type="PATRIC" id="fig|393305.7.peg.1924"/>
<dbReference type="eggNOG" id="COG4811">
    <property type="taxonomic scope" value="Bacteria"/>
</dbReference>
<dbReference type="HOGENOM" id="CLU_133645_0_0_6"/>
<dbReference type="OrthoDB" id="2360740at2"/>
<dbReference type="Proteomes" id="UP000000642">
    <property type="component" value="Chromosome"/>
</dbReference>
<dbReference type="GO" id="GO:0005886">
    <property type="term" value="C:plasma membrane"/>
    <property type="evidence" value="ECO:0007669"/>
    <property type="project" value="UniProtKB-SubCell"/>
</dbReference>
<dbReference type="HAMAP" id="MF_01071">
    <property type="entry name" value="UPF0266"/>
    <property type="match status" value="1"/>
</dbReference>
<dbReference type="InterPro" id="IPR009328">
    <property type="entry name" value="DUF986"/>
</dbReference>
<dbReference type="NCBIfam" id="NF002791">
    <property type="entry name" value="PRK02913.1"/>
    <property type="match status" value="1"/>
</dbReference>
<dbReference type="Pfam" id="PF06173">
    <property type="entry name" value="DUF986"/>
    <property type="match status" value="1"/>
</dbReference>
<dbReference type="PIRSF" id="PIRSF020687">
    <property type="entry name" value="UCP020687"/>
    <property type="match status" value="1"/>
</dbReference>
<comment type="subcellular location">
    <subcellularLocation>
        <location evidence="1">Cell inner membrane</location>
        <topology evidence="1">Multi-pass membrane protein</topology>
    </subcellularLocation>
</comment>
<comment type="similarity">
    <text evidence="1">Belongs to the UPF0266 family.</text>
</comment>
<organism>
    <name type="scientific">Yersinia enterocolitica serotype O:8 / biotype 1B (strain NCTC 13174 / 8081)</name>
    <dbReference type="NCBI Taxonomy" id="393305"/>
    <lineage>
        <taxon>Bacteria</taxon>
        <taxon>Pseudomonadati</taxon>
        <taxon>Pseudomonadota</taxon>
        <taxon>Gammaproteobacteria</taxon>
        <taxon>Enterobacterales</taxon>
        <taxon>Yersiniaceae</taxon>
        <taxon>Yersinia</taxon>
    </lineage>
</organism>
<sequence>MSVTDIVLIVFIALLLAYAIYDEFIMNMMKGKTRLQIQLKRKSKIDCAIFVGLIAILVYNNVMANGEPLTTYLLVGLALIAFYLSYIRWPKLLFKNTGFFYANAFIEYRRIKSMNLSEDGILVIDLEQRRLLIQVRQLDDLEKIYNFFVENQS</sequence>
<feature type="chain" id="PRO_1000064595" description="UPF0266 membrane protein YE1773">
    <location>
        <begin position="1"/>
        <end position="153"/>
    </location>
</feature>
<feature type="transmembrane region" description="Helical" evidence="1">
    <location>
        <begin position="6"/>
        <end position="26"/>
    </location>
</feature>
<feature type="transmembrane region" description="Helical" evidence="1">
    <location>
        <begin position="45"/>
        <end position="65"/>
    </location>
</feature>
<feature type="transmembrane region" description="Helical" evidence="1">
    <location>
        <begin position="67"/>
        <end position="87"/>
    </location>
</feature>
<gene>
    <name type="ordered locus">YE1773</name>
</gene>
<reference key="1">
    <citation type="journal article" date="2006" name="PLoS Genet.">
        <title>The complete genome sequence and comparative genome analysis of the high pathogenicity Yersinia enterocolitica strain 8081.</title>
        <authorList>
            <person name="Thomson N.R."/>
            <person name="Howard S."/>
            <person name="Wren B.W."/>
            <person name="Holden M.T.G."/>
            <person name="Crossman L."/>
            <person name="Challis G.L."/>
            <person name="Churcher C."/>
            <person name="Mungall K."/>
            <person name="Brooks K."/>
            <person name="Chillingworth T."/>
            <person name="Feltwell T."/>
            <person name="Abdellah Z."/>
            <person name="Hauser H."/>
            <person name="Jagels K."/>
            <person name="Maddison M."/>
            <person name="Moule S."/>
            <person name="Sanders M."/>
            <person name="Whitehead S."/>
            <person name="Quail M.A."/>
            <person name="Dougan G."/>
            <person name="Parkhill J."/>
            <person name="Prentice M.B."/>
        </authorList>
    </citation>
    <scope>NUCLEOTIDE SEQUENCE [LARGE SCALE GENOMIC DNA]</scope>
    <source>
        <strain>NCTC 13174 / 8081</strain>
    </source>
</reference>
<name>Y1773_YERE8</name>
<protein>
    <recommendedName>
        <fullName evidence="1">UPF0266 membrane protein YE1773</fullName>
    </recommendedName>
</protein>
<keyword id="KW-0997">Cell inner membrane</keyword>
<keyword id="KW-1003">Cell membrane</keyword>
<keyword id="KW-0472">Membrane</keyword>
<keyword id="KW-0812">Transmembrane</keyword>
<keyword id="KW-1133">Transmembrane helix</keyword>
<accession>A1JM96</accession>
<evidence type="ECO:0000255" key="1">
    <source>
        <dbReference type="HAMAP-Rule" id="MF_01071"/>
    </source>
</evidence>
<proteinExistence type="inferred from homology"/>